<proteinExistence type="inferred from homology"/>
<feature type="chain" id="PRO_0000388326" description="UPF0754 membrane protein CYB_2931">
    <location>
        <begin position="1"/>
        <end position="406"/>
    </location>
</feature>
<feature type="transmembrane region" description="Helical" evidence="2">
    <location>
        <begin position="1"/>
        <end position="21"/>
    </location>
</feature>
<feature type="transmembrane region" description="Helical" evidence="2">
    <location>
        <begin position="385"/>
        <end position="405"/>
    </location>
</feature>
<keyword id="KW-0997">Cell inner membrane</keyword>
<keyword id="KW-1003">Cell membrane</keyword>
<keyword id="KW-0472">Membrane</keyword>
<keyword id="KW-1185">Reference proteome</keyword>
<keyword id="KW-0812">Transmembrane</keyword>
<keyword id="KW-1133">Transmembrane helix</keyword>
<gene>
    <name type="ordered locus">CYB_2931</name>
</gene>
<accession>Q2JHS8</accession>
<comment type="subcellular location">
    <subcellularLocation>
        <location evidence="1">Cell inner membrane</location>
        <topology evidence="1">Multi-pass membrane protein</topology>
    </subcellularLocation>
</comment>
<comment type="similarity">
    <text evidence="3">Belongs to the UPF0754 family.</text>
</comment>
<organism>
    <name type="scientific">Synechococcus sp. (strain JA-2-3B'a(2-13))</name>
    <name type="common">Cyanobacteria bacterium Yellowstone B-Prime</name>
    <dbReference type="NCBI Taxonomy" id="321332"/>
    <lineage>
        <taxon>Bacteria</taxon>
        <taxon>Bacillati</taxon>
        <taxon>Cyanobacteriota</taxon>
        <taxon>Cyanophyceae</taxon>
        <taxon>Synechococcales</taxon>
        <taxon>Synechococcaceae</taxon>
        <taxon>Synechococcus</taxon>
    </lineage>
</organism>
<sequence>MAFWIYVVPPLAGLVIGYFTNDIAIKMLFRPYRPYRVFGWRIPFTPGLIPQNQPRLAKQIAKTIMGSLLTPEELHNLARKLLQTERMQAGIRWLLGVALDRLQNPEQQQQTAQVLARILADLFNESLPRLVKVLARQETFLEGPINQLFDQVLLELRLSSEQAKQLSEWILKQALPPKVLRQNLVDFLTDRNIESLDEEFRERATGSYWVVANLFGLKNALLRLRTYCLEEPEGAEAILEDLLKDINASRRLTEILQNLSLQNLPVSAVRQLRRALRDGIQDYLRSQGPEVIKGLGETIDWEKVASLVLGRLRNSKALITSIDQISADLALVLERYLERDLESLMMQVIPVLNLDQVIADKVNATSPADLEQAIQQIVRQELQAIVNLGGLLGFLVGCVQVLFLLG</sequence>
<evidence type="ECO:0000250" key="1"/>
<evidence type="ECO:0000255" key="2"/>
<evidence type="ECO:0000305" key="3"/>
<reference key="1">
    <citation type="journal article" date="2007" name="ISME J.">
        <title>Population level functional diversity in a microbial community revealed by comparative genomic and metagenomic analyses.</title>
        <authorList>
            <person name="Bhaya D."/>
            <person name="Grossman A.R."/>
            <person name="Steunou A.-S."/>
            <person name="Khuri N."/>
            <person name="Cohan F.M."/>
            <person name="Hamamura N."/>
            <person name="Melendrez M.C."/>
            <person name="Bateson M.M."/>
            <person name="Ward D.M."/>
            <person name="Heidelberg J.F."/>
        </authorList>
    </citation>
    <scope>NUCLEOTIDE SEQUENCE [LARGE SCALE GENOMIC DNA]</scope>
    <source>
        <strain>JA-2-3B'a(2-13)</strain>
    </source>
</reference>
<dbReference type="EMBL" id="CP000240">
    <property type="protein sequence ID" value="ABD03850.1"/>
    <property type="molecule type" value="Genomic_DNA"/>
</dbReference>
<dbReference type="RefSeq" id="WP_011434466.1">
    <property type="nucleotide sequence ID" value="NC_007776.1"/>
</dbReference>
<dbReference type="STRING" id="321332.CYB_2931"/>
<dbReference type="KEGG" id="cyb:CYB_2931"/>
<dbReference type="eggNOG" id="COG4399">
    <property type="taxonomic scope" value="Bacteria"/>
</dbReference>
<dbReference type="HOGENOM" id="CLU_042384_0_1_3"/>
<dbReference type="OrthoDB" id="9787430at2"/>
<dbReference type="Proteomes" id="UP000001938">
    <property type="component" value="Chromosome"/>
</dbReference>
<dbReference type="GO" id="GO:0005886">
    <property type="term" value="C:plasma membrane"/>
    <property type="evidence" value="ECO:0007669"/>
    <property type="project" value="UniProtKB-SubCell"/>
</dbReference>
<dbReference type="InterPro" id="IPR007383">
    <property type="entry name" value="DUF445"/>
</dbReference>
<dbReference type="InterPro" id="IPR016991">
    <property type="entry name" value="UCP032178"/>
</dbReference>
<dbReference type="PANTHER" id="PTHR35791">
    <property type="entry name" value="UPF0754 MEMBRANE PROTEIN YHEB"/>
    <property type="match status" value="1"/>
</dbReference>
<dbReference type="PANTHER" id="PTHR35791:SF1">
    <property type="entry name" value="UPF0754 MEMBRANE PROTEIN YHEB"/>
    <property type="match status" value="1"/>
</dbReference>
<dbReference type="Pfam" id="PF04286">
    <property type="entry name" value="DUF445"/>
    <property type="match status" value="1"/>
</dbReference>
<dbReference type="PIRSF" id="PIRSF032178">
    <property type="entry name" value="UCP032178"/>
    <property type="match status" value="1"/>
</dbReference>
<name>Y2931_SYNJB</name>
<protein>
    <recommendedName>
        <fullName>UPF0754 membrane protein CYB_2931</fullName>
    </recommendedName>
</protein>